<sequence>MDDVNSIVLAAGQAAEEGGTNNFLVPNGTFFFVLAIFLVVLAVIGTFVVPPILKVLRERDAMVAMTLADNKKSAEQFAAAQADYEKAMAEARVQASSYRHNARAEGRKVVEDARAHAEQEVASTLQQANEQLKRERDAVELDLRANVGAMSATLANRIVGVDVTTPAAAG</sequence>
<comment type="function">
    <text evidence="1">F(1)F(0) ATP synthase produces ATP from ADP in the presence of a proton or sodium gradient. F-type ATPases consist of two structural domains, F(1) containing the extramembraneous catalytic core and F(0) containing the membrane proton channel, linked together by a central stalk and a peripheral stalk. During catalysis, ATP synthesis in the catalytic domain of F(1) is coupled via a rotary mechanism of the central stalk subunits to proton translocation.</text>
</comment>
<comment type="function">
    <text evidence="1">Component of the F(0) channel, it forms part of the peripheral stalk, linking F(1) to F(0).</text>
</comment>
<comment type="subunit">
    <text evidence="1">F-type ATPases have 2 components, F(1) - the catalytic core - and F(0) - the membrane proton channel. F(1) has five subunits: alpha(3), beta(3), gamma(1), delta(1), epsilon(1). F(0) has three main subunits: a(1), b(2) and c(10-14). The alpha and beta chains form an alternating ring which encloses part of the gamma chain. F(1) is attached to F(0) by a central stalk formed by the gamma and epsilon chains, while a peripheral stalk is formed by the delta and b chains.</text>
</comment>
<comment type="subcellular location">
    <subcellularLocation>
        <location evidence="1">Cell membrane</location>
        <topology evidence="1">Single-pass membrane protein</topology>
    </subcellularLocation>
</comment>
<comment type="similarity">
    <text evidence="1">Belongs to the ATPase B chain family.</text>
</comment>
<proteinExistence type="inferred from homology"/>
<accession>A0PUK4</accession>
<organism>
    <name type="scientific">Mycobacterium ulcerans (strain Agy99)</name>
    <dbReference type="NCBI Taxonomy" id="362242"/>
    <lineage>
        <taxon>Bacteria</taxon>
        <taxon>Bacillati</taxon>
        <taxon>Actinomycetota</taxon>
        <taxon>Actinomycetes</taxon>
        <taxon>Mycobacteriales</taxon>
        <taxon>Mycobacteriaceae</taxon>
        <taxon>Mycobacterium</taxon>
        <taxon>Mycobacterium ulcerans group</taxon>
    </lineage>
</organism>
<evidence type="ECO:0000255" key="1">
    <source>
        <dbReference type="HAMAP-Rule" id="MF_01398"/>
    </source>
</evidence>
<dbReference type="EMBL" id="CP000325">
    <property type="protein sequence ID" value="ABL06023.1"/>
    <property type="molecule type" value="Genomic_DNA"/>
</dbReference>
<dbReference type="RefSeq" id="WP_011741628.1">
    <property type="nucleotide sequence ID" value="NC_008611.1"/>
</dbReference>
<dbReference type="SMR" id="A0PUK4"/>
<dbReference type="KEGG" id="mul:MUL_3958"/>
<dbReference type="eggNOG" id="COG0711">
    <property type="taxonomic scope" value="Bacteria"/>
</dbReference>
<dbReference type="HOGENOM" id="CLU_079215_5_2_11"/>
<dbReference type="Proteomes" id="UP000000765">
    <property type="component" value="Chromosome"/>
</dbReference>
<dbReference type="GO" id="GO:0005886">
    <property type="term" value="C:plasma membrane"/>
    <property type="evidence" value="ECO:0007669"/>
    <property type="project" value="UniProtKB-SubCell"/>
</dbReference>
<dbReference type="GO" id="GO:0045259">
    <property type="term" value="C:proton-transporting ATP synthase complex"/>
    <property type="evidence" value="ECO:0007669"/>
    <property type="project" value="UniProtKB-KW"/>
</dbReference>
<dbReference type="GO" id="GO:0046933">
    <property type="term" value="F:proton-transporting ATP synthase activity, rotational mechanism"/>
    <property type="evidence" value="ECO:0007669"/>
    <property type="project" value="UniProtKB-UniRule"/>
</dbReference>
<dbReference type="GO" id="GO:0046961">
    <property type="term" value="F:proton-transporting ATPase activity, rotational mechanism"/>
    <property type="evidence" value="ECO:0007669"/>
    <property type="project" value="TreeGrafter"/>
</dbReference>
<dbReference type="CDD" id="cd06503">
    <property type="entry name" value="ATP-synt_Fo_b"/>
    <property type="match status" value="1"/>
</dbReference>
<dbReference type="Gene3D" id="1.20.5.620">
    <property type="entry name" value="F1F0 ATP synthase subunit B, membrane domain"/>
    <property type="match status" value="1"/>
</dbReference>
<dbReference type="HAMAP" id="MF_01398">
    <property type="entry name" value="ATP_synth_b_bprime"/>
    <property type="match status" value="1"/>
</dbReference>
<dbReference type="InterPro" id="IPR028987">
    <property type="entry name" value="ATP_synth_B-like_membr_sf"/>
</dbReference>
<dbReference type="InterPro" id="IPR002146">
    <property type="entry name" value="ATP_synth_b/b'su_bac/chlpt"/>
</dbReference>
<dbReference type="InterPro" id="IPR050059">
    <property type="entry name" value="ATP_synthase_B_chain"/>
</dbReference>
<dbReference type="NCBIfam" id="NF004412">
    <property type="entry name" value="PRK05759.1-3"/>
    <property type="match status" value="1"/>
</dbReference>
<dbReference type="PANTHER" id="PTHR33445:SF1">
    <property type="entry name" value="ATP SYNTHASE SUBUNIT B"/>
    <property type="match status" value="1"/>
</dbReference>
<dbReference type="PANTHER" id="PTHR33445">
    <property type="entry name" value="ATP SYNTHASE SUBUNIT B', CHLOROPLASTIC"/>
    <property type="match status" value="1"/>
</dbReference>
<dbReference type="Pfam" id="PF00430">
    <property type="entry name" value="ATP-synt_B"/>
    <property type="match status" value="1"/>
</dbReference>
<dbReference type="SUPFAM" id="SSF81573">
    <property type="entry name" value="F1F0 ATP synthase subunit B, membrane domain"/>
    <property type="match status" value="1"/>
</dbReference>
<keyword id="KW-0066">ATP synthesis</keyword>
<keyword id="KW-1003">Cell membrane</keyword>
<keyword id="KW-0138">CF(0)</keyword>
<keyword id="KW-0375">Hydrogen ion transport</keyword>
<keyword id="KW-0406">Ion transport</keyword>
<keyword id="KW-0472">Membrane</keyword>
<keyword id="KW-0812">Transmembrane</keyword>
<keyword id="KW-1133">Transmembrane helix</keyword>
<keyword id="KW-0813">Transport</keyword>
<gene>
    <name evidence="1" type="primary">atpF</name>
    <name type="ordered locus">MUL_3958</name>
</gene>
<name>ATPF_MYCUA</name>
<reference key="1">
    <citation type="journal article" date="2007" name="Genome Res.">
        <title>Reductive evolution and niche adaptation inferred from the genome of Mycobacterium ulcerans, the causative agent of Buruli ulcer.</title>
        <authorList>
            <person name="Stinear T.P."/>
            <person name="Seemann T."/>
            <person name="Pidot S."/>
            <person name="Frigui W."/>
            <person name="Reysset G."/>
            <person name="Garnier T."/>
            <person name="Meurice G."/>
            <person name="Simon D."/>
            <person name="Bouchier C."/>
            <person name="Ma L."/>
            <person name="Tichit M."/>
            <person name="Porter J.L."/>
            <person name="Ryan J."/>
            <person name="Johnson P.D.R."/>
            <person name="Davies J.K."/>
            <person name="Jenkin G.A."/>
            <person name="Small P.L.C."/>
            <person name="Jones L.M."/>
            <person name="Tekaia F."/>
            <person name="Laval F."/>
            <person name="Daffe M."/>
            <person name="Parkhill J."/>
            <person name="Cole S.T."/>
        </authorList>
    </citation>
    <scope>NUCLEOTIDE SEQUENCE [LARGE SCALE GENOMIC DNA]</scope>
    <source>
        <strain>Agy99</strain>
    </source>
</reference>
<feature type="chain" id="PRO_0000368604" description="ATP synthase subunit b">
    <location>
        <begin position="1"/>
        <end position="170"/>
    </location>
</feature>
<feature type="transmembrane region" description="Helical" evidence="1">
    <location>
        <begin position="30"/>
        <end position="50"/>
    </location>
</feature>
<protein>
    <recommendedName>
        <fullName evidence="1">ATP synthase subunit b</fullName>
    </recommendedName>
    <alternativeName>
        <fullName evidence="1">ATP synthase F(0) sector subunit b</fullName>
    </alternativeName>
    <alternativeName>
        <fullName evidence="1">ATPase subunit I</fullName>
    </alternativeName>
    <alternativeName>
        <fullName evidence="1">F-type ATPase subunit b</fullName>
        <shortName evidence="1">F-ATPase subunit b</shortName>
    </alternativeName>
</protein>